<accession>Q8TK88</accession>
<keyword id="KW-0067">ATP-binding</keyword>
<keyword id="KW-0436">Ligase</keyword>
<keyword id="KW-0460">Magnesium</keyword>
<keyword id="KW-0479">Metal-binding</keyword>
<keyword id="KW-0520">NAD</keyword>
<keyword id="KW-0547">Nucleotide-binding</keyword>
<keyword id="KW-1185">Reference proteome</keyword>
<feature type="chain" id="PRO_0000152223" description="NH(3)-dependent NAD(+) synthetase">
    <location>
        <begin position="1"/>
        <end position="256"/>
    </location>
</feature>
<feature type="binding site" evidence="1">
    <location>
        <begin position="29"/>
        <end position="36"/>
    </location>
    <ligand>
        <name>ATP</name>
        <dbReference type="ChEBI" id="CHEBI:30616"/>
    </ligand>
</feature>
<feature type="binding site" evidence="1">
    <location>
        <position position="35"/>
    </location>
    <ligand>
        <name>Mg(2+)</name>
        <dbReference type="ChEBI" id="CHEBI:18420"/>
    </ligand>
</feature>
<feature type="binding site" evidence="1">
    <location>
        <position position="115"/>
    </location>
    <ligand>
        <name>deamido-NAD(+)</name>
        <dbReference type="ChEBI" id="CHEBI:58437"/>
    </ligand>
</feature>
<feature type="binding site" evidence="1">
    <location>
        <position position="135"/>
    </location>
    <ligand>
        <name>ATP</name>
        <dbReference type="ChEBI" id="CHEBI:30616"/>
    </ligand>
</feature>
<feature type="binding site" evidence="1">
    <location>
        <position position="140"/>
    </location>
    <ligand>
        <name>Mg(2+)</name>
        <dbReference type="ChEBI" id="CHEBI:18420"/>
    </ligand>
</feature>
<feature type="binding site" evidence="1">
    <location>
        <position position="148"/>
    </location>
    <ligand>
        <name>deamido-NAD(+)</name>
        <dbReference type="ChEBI" id="CHEBI:58437"/>
    </ligand>
</feature>
<feature type="binding site" evidence="1">
    <location>
        <position position="155"/>
    </location>
    <ligand>
        <name>deamido-NAD(+)</name>
        <dbReference type="ChEBI" id="CHEBI:58437"/>
    </ligand>
</feature>
<feature type="binding site" evidence="1">
    <location>
        <position position="164"/>
    </location>
    <ligand>
        <name>ATP</name>
        <dbReference type="ChEBI" id="CHEBI:30616"/>
    </ligand>
</feature>
<feature type="binding site" evidence="1">
    <location>
        <position position="186"/>
    </location>
    <ligand>
        <name>ATP</name>
        <dbReference type="ChEBI" id="CHEBI:30616"/>
    </ligand>
</feature>
<feature type="binding site" evidence="1">
    <location>
        <begin position="245"/>
        <end position="246"/>
    </location>
    <ligand>
        <name>deamido-NAD(+)</name>
        <dbReference type="ChEBI" id="CHEBI:58437"/>
    </ligand>
</feature>
<dbReference type="EC" id="6.3.1.5" evidence="1"/>
<dbReference type="EMBL" id="AE010299">
    <property type="protein sequence ID" value="AAM06889.1"/>
    <property type="molecule type" value="Genomic_DNA"/>
</dbReference>
<dbReference type="SMR" id="Q8TK88"/>
<dbReference type="FunCoup" id="Q8TK88">
    <property type="interactions" value="96"/>
</dbReference>
<dbReference type="STRING" id="188937.MA_3526"/>
<dbReference type="EnsemblBacteria" id="AAM06889">
    <property type="protein sequence ID" value="AAM06889"/>
    <property type="gene ID" value="MA_3526"/>
</dbReference>
<dbReference type="KEGG" id="mac:MA_3526"/>
<dbReference type="HOGENOM" id="CLU_059327_1_1_2"/>
<dbReference type="InParanoid" id="Q8TK88"/>
<dbReference type="OrthoDB" id="39312at2157"/>
<dbReference type="PhylomeDB" id="Q8TK88"/>
<dbReference type="UniPathway" id="UPA00253">
    <property type="reaction ID" value="UER00333"/>
</dbReference>
<dbReference type="Proteomes" id="UP000002487">
    <property type="component" value="Chromosome"/>
</dbReference>
<dbReference type="GO" id="GO:0005737">
    <property type="term" value="C:cytoplasm"/>
    <property type="evidence" value="ECO:0000318"/>
    <property type="project" value="GO_Central"/>
</dbReference>
<dbReference type="GO" id="GO:0005524">
    <property type="term" value="F:ATP binding"/>
    <property type="evidence" value="ECO:0007669"/>
    <property type="project" value="UniProtKB-UniRule"/>
</dbReference>
<dbReference type="GO" id="GO:0004359">
    <property type="term" value="F:glutaminase activity"/>
    <property type="evidence" value="ECO:0007669"/>
    <property type="project" value="InterPro"/>
</dbReference>
<dbReference type="GO" id="GO:0046872">
    <property type="term" value="F:metal ion binding"/>
    <property type="evidence" value="ECO:0007669"/>
    <property type="project" value="UniProtKB-KW"/>
</dbReference>
<dbReference type="GO" id="GO:0003952">
    <property type="term" value="F:NAD+ synthase (glutamine-hydrolyzing) activity"/>
    <property type="evidence" value="ECO:0007669"/>
    <property type="project" value="InterPro"/>
</dbReference>
<dbReference type="GO" id="GO:0008795">
    <property type="term" value="F:NAD+ synthase activity"/>
    <property type="evidence" value="ECO:0007669"/>
    <property type="project" value="UniProtKB-UniRule"/>
</dbReference>
<dbReference type="GO" id="GO:0009435">
    <property type="term" value="P:NAD biosynthetic process"/>
    <property type="evidence" value="ECO:0000318"/>
    <property type="project" value="GO_Central"/>
</dbReference>
<dbReference type="CDD" id="cd00553">
    <property type="entry name" value="NAD_synthase"/>
    <property type="match status" value="1"/>
</dbReference>
<dbReference type="FunFam" id="3.40.50.620:FF:000106">
    <property type="entry name" value="Glutamine-dependent NAD(+) synthetase"/>
    <property type="match status" value="1"/>
</dbReference>
<dbReference type="Gene3D" id="3.40.50.620">
    <property type="entry name" value="HUPs"/>
    <property type="match status" value="1"/>
</dbReference>
<dbReference type="HAMAP" id="MF_00193">
    <property type="entry name" value="NadE_ammonia_dep"/>
    <property type="match status" value="1"/>
</dbReference>
<dbReference type="InterPro" id="IPR022310">
    <property type="entry name" value="NAD/GMP_synthase"/>
</dbReference>
<dbReference type="InterPro" id="IPR003694">
    <property type="entry name" value="NAD_synthase"/>
</dbReference>
<dbReference type="InterPro" id="IPR022926">
    <property type="entry name" value="NH(3)-dep_NAD(+)_synth"/>
</dbReference>
<dbReference type="InterPro" id="IPR014729">
    <property type="entry name" value="Rossmann-like_a/b/a_fold"/>
</dbReference>
<dbReference type="NCBIfam" id="TIGR00552">
    <property type="entry name" value="nadE"/>
    <property type="match status" value="1"/>
</dbReference>
<dbReference type="NCBIfam" id="NF010587">
    <property type="entry name" value="PRK13980.1"/>
    <property type="match status" value="1"/>
</dbReference>
<dbReference type="PANTHER" id="PTHR23090:SF9">
    <property type="entry name" value="GLUTAMINE-DEPENDENT NAD(+) SYNTHETASE"/>
    <property type="match status" value="1"/>
</dbReference>
<dbReference type="PANTHER" id="PTHR23090">
    <property type="entry name" value="NH 3 /GLUTAMINE-DEPENDENT NAD + SYNTHETASE"/>
    <property type="match status" value="1"/>
</dbReference>
<dbReference type="Pfam" id="PF02540">
    <property type="entry name" value="NAD_synthase"/>
    <property type="match status" value="1"/>
</dbReference>
<dbReference type="SUPFAM" id="SSF52402">
    <property type="entry name" value="Adenine nucleotide alpha hydrolases-like"/>
    <property type="match status" value="1"/>
</dbReference>
<protein>
    <recommendedName>
        <fullName evidence="1">NH(3)-dependent NAD(+) synthetase</fullName>
        <ecNumber evidence="1">6.3.1.5</ecNumber>
    </recommendedName>
</protein>
<proteinExistence type="inferred from homology"/>
<sequence length="256" mass="28295">MDFEKAQNRIIEFIRNETDKAGVDGAVVGISGGIDSALTATLTVEALGKERVLGLHMPESSLTPAVDSEDAKILADWLGIEYRTIDISGIVSAFMASIPESESSDRLTRGNLKARTRMSLLYFHANRLNRMVVGTGNKTEILLGYYTKYGDGGVDLEPIGGIYKTEVWELSRRLGIPDPLITKKPSAGLWTGQTDEAELGISYLKVDDVLRMIEEGAEQEKILKDTGISIEQLNSVTRRIERNEHKRKSPPVPELY</sequence>
<name>NADE_METAC</name>
<comment type="function">
    <text evidence="1">Catalyzes the ATP-dependent amidation of deamido-NAD to form NAD. Uses ammonia as a nitrogen source.</text>
</comment>
<comment type="catalytic activity">
    <reaction evidence="1">
        <text>deamido-NAD(+) + NH4(+) + ATP = AMP + diphosphate + NAD(+) + H(+)</text>
        <dbReference type="Rhea" id="RHEA:21188"/>
        <dbReference type="ChEBI" id="CHEBI:15378"/>
        <dbReference type="ChEBI" id="CHEBI:28938"/>
        <dbReference type="ChEBI" id="CHEBI:30616"/>
        <dbReference type="ChEBI" id="CHEBI:33019"/>
        <dbReference type="ChEBI" id="CHEBI:57540"/>
        <dbReference type="ChEBI" id="CHEBI:58437"/>
        <dbReference type="ChEBI" id="CHEBI:456215"/>
        <dbReference type="EC" id="6.3.1.5"/>
    </reaction>
</comment>
<comment type="pathway">
    <text evidence="1">Cofactor biosynthesis; NAD(+) biosynthesis; NAD(+) from deamido-NAD(+) (ammonia route): step 1/1.</text>
</comment>
<comment type="subunit">
    <text evidence="1">Homodimer.</text>
</comment>
<comment type="similarity">
    <text evidence="1">Belongs to the NAD synthetase family.</text>
</comment>
<evidence type="ECO:0000255" key="1">
    <source>
        <dbReference type="HAMAP-Rule" id="MF_00193"/>
    </source>
</evidence>
<reference key="1">
    <citation type="journal article" date="2002" name="Genome Res.">
        <title>The genome of Methanosarcina acetivorans reveals extensive metabolic and physiological diversity.</title>
        <authorList>
            <person name="Galagan J.E."/>
            <person name="Nusbaum C."/>
            <person name="Roy A."/>
            <person name="Endrizzi M.G."/>
            <person name="Macdonald P."/>
            <person name="FitzHugh W."/>
            <person name="Calvo S."/>
            <person name="Engels R."/>
            <person name="Smirnov S."/>
            <person name="Atnoor D."/>
            <person name="Brown A."/>
            <person name="Allen N."/>
            <person name="Naylor J."/>
            <person name="Stange-Thomann N."/>
            <person name="DeArellano K."/>
            <person name="Johnson R."/>
            <person name="Linton L."/>
            <person name="McEwan P."/>
            <person name="McKernan K."/>
            <person name="Talamas J."/>
            <person name="Tirrell A."/>
            <person name="Ye W."/>
            <person name="Zimmer A."/>
            <person name="Barber R.D."/>
            <person name="Cann I."/>
            <person name="Graham D.E."/>
            <person name="Grahame D.A."/>
            <person name="Guss A.M."/>
            <person name="Hedderich R."/>
            <person name="Ingram-Smith C."/>
            <person name="Kuettner H.C."/>
            <person name="Krzycki J.A."/>
            <person name="Leigh J.A."/>
            <person name="Li W."/>
            <person name="Liu J."/>
            <person name="Mukhopadhyay B."/>
            <person name="Reeve J.N."/>
            <person name="Smith K."/>
            <person name="Springer T.A."/>
            <person name="Umayam L.A."/>
            <person name="White O."/>
            <person name="White R.H."/>
            <person name="de Macario E.C."/>
            <person name="Ferry J.G."/>
            <person name="Jarrell K.F."/>
            <person name="Jing H."/>
            <person name="Macario A.J.L."/>
            <person name="Paulsen I.T."/>
            <person name="Pritchett M."/>
            <person name="Sowers K.R."/>
            <person name="Swanson R.V."/>
            <person name="Zinder S.H."/>
            <person name="Lander E."/>
            <person name="Metcalf W.W."/>
            <person name="Birren B."/>
        </authorList>
    </citation>
    <scope>NUCLEOTIDE SEQUENCE [LARGE SCALE GENOMIC DNA]</scope>
    <source>
        <strain>ATCC 35395 / DSM 2834 / JCM 12185 / C2A</strain>
    </source>
</reference>
<organism>
    <name type="scientific">Methanosarcina acetivorans (strain ATCC 35395 / DSM 2834 / JCM 12185 / C2A)</name>
    <dbReference type="NCBI Taxonomy" id="188937"/>
    <lineage>
        <taxon>Archaea</taxon>
        <taxon>Methanobacteriati</taxon>
        <taxon>Methanobacteriota</taxon>
        <taxon>Stenosarchaea group</taxon>
        <taxon>Methanomicrobia</taxon>
        <taxon>Methanosarcinales</taxon>
        <taxon>Methanosarcinaceae</taxon>
        <taxon>Methanosarcina</taxon>
    </lineage>
</organism>
<gene>
    <name evidence="1" type="primary">nadE</name>
    <name type="ordered locus">MA_3526</name>
</gene>